<protein>
    <recommendedName>
        <fullName evidence="1">Transcriptional regulator GfcR</fullName>
    </recommendedName>
</protein>
<organism>
    <name type="scientific">Methanoculleus marisnigri (strain ATCC 35101 / DSM 1498 / JR1)</name>
    <dbReference type="NCBI Taxonomy" id="368407"/>
    <lineage>
        <taxon>Archaea</taxon>
        <taxon>Methanobacteriati</taxon>
        <taxon>Methanobacteriota</taxon>
        <taxon>Stenosarchaea group</taxon>
        <taxon>Methanomicrobia</taxon>
        <taxon>Methanomicrobiales</taxon>
        <taxon>Methanomicrobiaceae</taxon>
        <taxon>Methanoculleus</taxon>
    </lineage>
</organism>
<feature type="chain" id="PRO_0000298899" description="Transcriptional regulator GfcR">
    <location>
        <begin position="1"/>
        <end position="204"/>
    </location>
</feature>
<keyword id="KW-0238">DNA-binding</keyword>
<keyword id="KW-0804">Transcription</keyword>
<keyword id="KW-0805">Transcription regulation</keyword>
<gene>
    <name evidence="1" type="primary">gfcR</name>
    <name type="ordered locus">Memar_0272</name>
</gene>
<dbReference type="EMBL" id="CP000562">
    <property type="protein sequence ID" value="ABN56206.1"/>
    <property type="molecule type" value="Genomic_DNA"/>
</dbReference>
<dbReference type="RefSeq" id="WP_011843127.1">
    <property type="nucleotide sequence ID" value="NC_009051.1"/>
</dbReference>
<dbReference type="SMR" id="A3CS56"/>
<dbReference type="STRING" id="368407.Memar_0272"/>
<dbReference type="GeneID" id="4847605"/>
<dbReference type="KEGG" id="mem:Memar_0272"/>
<dbReference type="eggNOG" id="arCOG00028">
    <property type="taxonomic scope" value="Archaea"/>
</dbReference>
<dbReference type="HOGENOM" id="CLU_111001_0_0_2"/>
<dbReference type="OrthoDB" id="68893at2157"/>
<dbReference type="Proteomes" id="UP000002146">
    <property type="component" value="Chromosome"/>
</dbReference>
<dbReference type="GO" id="GO:0003677">
    <property type="term" value="F:DNA binding"/>
    <property type="evidence" value="ECO:0007669"/>
    <property type="project" value="UniProtKB-UniRule"/>
</dbReference>
<dbReference type="GO" id="GO:0004588">
    <property type="term" value="F:orotate phosphoribosyltransferase activity"/>
    <property type="evidence" value="ECO:0007669"/>
    <property type="project" value="TreeGrafter"/>
</dbReference>
<dbReference type="GO" id="GO:0019856">
    <property type="term" value="P:pyrimidine nucleobase biosynthetic process"/>
    <property type="evidence" value="ECO:0007669"/>
    <property type="project" value="TreeGrafter"/>
</dbReference>
<dbReference type="GO" id="GO:0010468">
    <property type="term" value="P:regulation of gene expression"/>
    <property type="evidence" value="ECO:0007669"/>
    <property type="project" value="UniProtKB-UniRule"/>
</dbReference>
<dbReference type="GO" id="GO:0006222">
    <property type="term" value="P:UMP biosynthetic process"/>
    <property type="evidence" value="ECO:0007669"/>
    <property type="project" value="TreeGrafter"/>
</dbReference>
<dbReference type="CDD" id="cd06223">
    <property type="entry name" value="PRTases_typeI"/>
    <property type="match status" value="1"/>
</dbReference>
<dbReference type="Gene3D" id="3.40.50.2020">
    <property type="match status" value="1"/>
</dbReference>
<dbReference type="HAMAP" id="MF_01214">
    <property type="entry name" value="GfcR"/>
    <property type="match status" value="1"/>
</dbReference>
<dbReference type="InterPro" id="IPR022854">
    <property type="entry name" value="GfcR-like"/>
</dbReference>
<dbReference type="InterPro" id="IPR000836">
    <property type="entry name" value="PRibTrfase_dom"/>
</dbReference>
<dbReference type="InterPro" id="IPR029057">
    <property type="entry name" value="PRTase-like"/>
</dbReference>
<dbReference type="NCBIfam" id="NF002620">
    <property type="entry name" value="PRK02277.1"/>
    <property type="match status" value="1"/>
</dbReference>
<dbReference type="PANTHER" id="PTHR19278">
    <property type="entry name" value="OROTATE PHOSPHORIBOSYLTRANSFERASE"/>
    <property type="match status" value="1"/>
</dbReference>
<dbReference type="PANTHER" id="PTHR19278:SF41">
    <property type="entry name" value="PYRE-LIKE PROTEIN"/>
    <property type="match status" value="1"/>
</dbReference>
<dbReference type="Pfam" id="PF00156">
    <property type="entry name" value="Pribosyltran"/>
    <property type="match status" value="1"/>
</dbReference>
<dbReference type="SUPFAM" id="SSF53271">
    <property type="entry name" value="PRTase-like"/>
    <property type="match status" value="1"/>
</dbReference>
<dbReference type="PROSITE" id="PS00103">
    <property type="entry name" value="PUR_PYR_PR_TRANSFER"/>
    <property type="match status" value="1"/>
</dbReference>
<comment type="domain">
    <text evidence="1">Contains an N-terminal DNA-binding winged helix-turn-helix domain and a C-terminal regulatory domain (or effector binding domain) resembling phosphoribosyltransferase (PRT) domain.</text>
</comment>
<comment type="similarity">
    <text evidence="1">Belongs to the purine/pyrimidine phosphoribosyltransferase family. GfcR subfamily.</text>
</comment>
<proteinExistence type="inferred from homology"/>
<reference key="1">
    <citation type="journal article" date="2009" name="Stand. Genomic Sci.">
        <title>Complete genome sequence of Methanoculleus marisnigri Romesser et al. 1981 type strain JR1.</title>
        <authorList>
            <person name="Anderson I.J."/>
            <person name="Sieprawska-Lupa M."/>
            <person name="Lapidus A."/>
            <person name="Nolan M."/>
            <person name="Copeland A."/>
            <person name="Glavina Del Rio T."/>
            <person name="Tice H."/>
            <person name="Dalin E."/>
            <person name="Barry K."/>
            <person name="Saunders E."/>
            <person name="Han C."/>
            <person name="Brettin T."/>
            <person name="Detter J.C."/>
            <person name="Bruce D."/>
            <person name="Mikhailova N."/>
            <person name="Pitluck S."/>
            <person name="Hauser L."/>
            <person name="Land M."/>
            <person name="Lucas S."/>
            <person name="Richardson P."/>
            <person name="Whitman W.B."/>
            <person name="Kyrpides N.C."/>
        </authorList>
    </citation>
    <scope>NUCLEOTIDE SEQUENCE [LARGE SCALE GENOMIC DNA]</scope>
    <source>
        <strain>ATCC 35101 / DSM 1498 / JR1</strain>
    </source>
</reference>
<accession>A3CS56</accession>
<name>GFCR_METMJ</name>
<sequence>MSALEELITKAKALQAEGHTPGQISDELGLSMETVTWLLTQQKGMEAPKDVHIDWAAVGSHGVLLNDMAMMMLKRFLYLEEGGDVRAIEDLPDTVVGIAPSGAPLATLIAAEEGLKLAVYLPAKHSRSEAPTGSLSGTFSAIAAQRCIIVDDVVTTGTTLSETIAFLRQHGATPVAVWSLFDKRGAREIDGVPVHSLFVISRLG</sequence>
<evidence type="ECO:0000255" key="1">
    <source>
        <dbReference type="HAMAP-Rule" id="MF_01214"/>
    </source>
</evidence>